<name>LRC20_MOUSE</name>
<evidence type="ECO:0000250" key="1">
    <source>
        <dbReference type="UniProtKB" id="Q8TCA0"/>
    </source>
</evidence>
<gene>
    <name type="primary">Lrrc20</name>
</gene>
<keyword id="KW-0433">Leucine-rich repeat</keyword>
<keyword id="KW-0597">Phosphoprotein</keyword>
<keyword id="KW-1185">Reference proteome</keyword>
<keyword id="KW-0677">Repeat</keyword>
<feature type="chain" id="PRO_0000084476" description="Leucine-rich repeat-containing protein 20">
    <location>
        <begin position="1"/>
        <end position="184"/>
    </location>
</feature>
<feature type="repeat" description="LRR 1">
    <location>
        <begin position="23"/>
        <end position="44"/>
    </location>
</feature>
<feature type="repeat" description="LRR 2">
    <location>
        <begin position="51"/>
        <end position="72"/>
    </location>
</feature>
<feature type="repeat" description="LRR 3">
    <location>
        <begin position="75"/>
        <end position="96"/>
    </location>
</feature>
<feature type="repeat" description="LRR 4">
    <location>
        <begin position="98"/>
        <end position="120"/>
    </location>
</feature>
<feature type="repeat" description="LRR 5">
    <location>
        <begin position="121"/>
        <end position="141"/>
    </location>
</feature>
<feature type="repeat" description="LRR 6">
    <location>
        <begin position="145"/>
        <end position="167"/>
    </location>
</feature>
<feature type="modified residue" description="Phosphoserine" evidence="1">
    <location>
        <position position="175"/>
    </location>
</feature>
<accession>Q8CI70</accession>
<reference key="1">
    <citation type="journal article" date="2005" name="Science">
        <title>The transcriptional landscape of the mammalian genome.</title>
        <authorList>
            <person name="Carninci P."/>
            <person name="Kasukawa T."/>
            <person name="Katayama S."/>
            <person name="Gough J."/>
            <person name="Frith M.C."/>
            <person name="Maeda N."/>
            <person name="Oyama R."/>
            <person name="Ravasi T."/>
            <person name="Lenhard B."/>
            <person name="Wells C."/>
            <person name="Kodzius R."/>
            <person name="Shimokawa K."/>
            <person name="Bajic V.B."/>
            <person name="Brenner S.E."/>
            <person name="Batalov S."/>
            <person name="Forrest A.R."/>
            <person name="Zavolan M."/>
            <person name="Davis M.J."/>
            <person name="Wilming L.G."/>
            <person name="Aidinis V."/>
            <person name="Allen J.E."/>
            <person name="Ambesi-Impiombato A."/>
            <person name="Apweiler R."/>
            <person name="Aturaliya R.N."/>
            <person name="Bailey T.L."/>
            <person name="Bansal M."/>
            <person name="Baxter L."/>
            <person name="Beisel K.W."/>
            <person name="Bersano T."/>
            <person name="Bono H."/>
            <person name="Chalk A.M."/>
            <person name="Chiu K.P."/>
            <person name="Choudhary V."/>
            <person name="Christoffels A."/>
            <person name="Clutterbuck D.R."/>
            <person name="Crowe M.L."/>
            <person name="Dalla E."/>
            <person name="Dalrymple B.P."/>
            <person name="de Bono B."/>
            <person name="Della Gatta G."/>
            <person name="di Bernardo D."/>
            <person name="Down T."/>
            <person name="Engstrom P."/>
            <person name="Fagiolini M."/>
            <person name="Faulkner G."/>
            <person name="Fletcher C.F."/>
            <person name="Fukushima T."/>
            <person name="Furuno M."/>
            <person name="Futaki S."/>
            <person name="Gariboldi M."/>
            <person name="Georgii-Hemming P."/>
            <person name="Gingeras T.R."/>
            <person name="Gojobori T."/>
            <person name="Green R.E."/>
            <person name="Gustincich S."/>
            <person name="Harbers M."/>
            <person name="Hayashi Y."/>
            <person name="Hensch T.K."/>
            <person name="Hirokawa N."/>
            <person name="Hill D."/>
            <person name="Huminiecki L."/>
            <person name="Iacono M."/>
            <person name="Ikeo K."/>
            <person name="Iwama A."/>
            <person name="Ishikawa T."/>
            <person name="Jakt M."/>
            <person name="Kanapin A."/>
            <person name="Katoh M."/>
            <person name="Kawasawa Y."/>
            <person name="Kelso J."/>
            <person name="Kitamura H."/>
            <person name="Kitano H."/>
            <person name="Kollias G."/>
            <person name="Krishnan S.P."/>
            <person name="Kruger A."/>
            <person name="Kummerfeld S.K."/>
            <person name="Kurochkin I.V."/>
            <person name="Lareau L.F."/>
            <person name="Lazarevic D."/>
            <person name="Lipovich L."/>
            <person name="Liu J."/>
            <person name="Liuni S."/>
            <person name="McWilliam S."/>
            <person name="Madan Babu M."/>
            <person name="Madera M."/>
            <person name="Marchionni L."/>
            <person name="Matsuda H."/>
            <person name="Matsuzawa S."/>
            <person name="Miki H."/>
            <person name="Mignone F."/>
            <person name="Miyake S."/>
            <person name="Morris K."/>
            <person name="Mottagui-Tabar S."/>
            <person name="Mulder N."/>
            <person name="Nakano N."/>
            <person name="Nakauchi H."/>
            <person name="Ng P."/>
            <person name="Nilsson R."/>
            <person name="Nishiguchi S."/>
            <person name="Nishikawa S."/>
            <person name="Nori F."/>
            <person name="Ohara O."/>
            <person name="Okazaki Y."/>
            <person name="Orlando V."/>
            <person name="Pang K.C."/>
            <person name="Pavan W.J."/>
            <person name="Pavesi G."/>
            <person name="Pesole G."/>
            <person name="Petrovsky N."/>
            <person name="Piazza S."/>
            <person name="Reed J."/>
            <person name="Reid J.F."/>
            <person name="Ring B.Z."/>
            <person name="Ringwald M."/>
            <person name="Rost B."/>
            <person name="Ruan Y."/>
            <person name="Salzberg S.L."/>
            <person name="Sandelin A."/>
            <person name="Schneider C."/>
            <person name="Schoenbach C."/>
            <person name="Sekiguchi K."/>
            <person name="Semple C.A."/>
            <person name="Seno S."/>
            <person name="Sessa L."/>
            <person name="Sheng Y."/>
            <person name="Shibata Y."/>
            <person name="Shimada H."/>
            <person name="Shimada K."/>
            <person name="Silva D."/>
            <person name="Sinclair B."/>
            <person name="Sperling S."/>
            <person name="Stupka E."/>
            <person name="Sugiura K."/>
            <person name="Sultana R."/>
            <person name="Takenaka Y."/>
            <person name="Taki K."/>
            <person name="Tammoja K."/>
            <person name="Tan S.L."/>
            <person name="Tang S."/>
            <person name="Taylor M.S."/>
            <person name="Tegner J."/>
            <person name="Teichmann S.A."/>
            <person name="Ueda H.R."/>
            <person name="van Nimwegen E."/>
            <person name="Verardo R."/>
            <person name="Wei C.L."/>
            <person name="Yagi K."/>
            <person name="Yamanishi H."/>
            <person name="Zabarovsky E."/>
            <person name="Zhu S."/>
            <person name="Zimmer A."/>
            <person name="Hide W."/>
            <person name="Bult C."/>
            <person name="Grimmond S.M."/>
            <person name="Teasdale R.D."/>
            <person name="Liu E.T."/>
            <person name="Brusic V."/>
            <person name="Quackenbush J."/>
            <person name="Wahlestedt C."/>
            <person name="Mattick J.S."/>
            <person name="Hume D.A."/>
            <person name="Kai C."/>
            <person name="Sasaki D."/>
            <person name="Tomaru Y."/>
            <person name="Fukuda S."/>
            <person name="Kanamori-Katayama M."/>
            <person name="Suzuki M."/>
            <person name="Aoki J."/>
            <person name="Arakawa T."/>
            <person name="Iida J."/>
            <person name="Imamura K."/>
            <person name="Itoh M."/>
            <person name="Kato T."/>
            <person name="Kawaji H."/>
            <person name="Kawagashira N."/>
            <person name="Kawashima T."/>
            <person name="Kojima M."/>
            <person name="Kondo S."/>
            <person name="Konno H."/>
            <person name="Nakano K."/>
            <person name="Ninomiya N."/>
            <person name="Nishio T."/>
            <person name="Okada M."/>
            <person name="Plessy C."/>
            <person name="Shibata K."/>
            <person name="Shiraki T."/>
            <person name="Suzuki S."/>
            <person name="Tagami M."/>
            <person name="Waki K."/>
            <person name="Watahiki A."/>
            <person name="Okamura-Oho Y."/>
            <person name="Suzuki H."/>
            <person name="Kawai J."/>
            <person name="Hayashizaki Y."/>
        </authorList>
    </citation>
    <scope>NUCLEOTIDE SEQUENCE [LARGE SCALE MRNA]</scope>
    <source>
        <strain>C57BL/6J</strain>
        <tissue>Bone marrow</tissue>
        <tissue>Brain cortex</tissue>
        <tissue>Liver</tissue>
        <tissue>Lung</tissue>
    </source>
</reference>
<reference key="2">
    <citation type="journal article" date="2004" name="Genome Res.">
        <title>The status, quality, and expansion of the NIH full-length cDNA project: the Mammalian Gene Collection (MGC).</title>
        <authorList>
            <consortium name="The MGC Project Team"/>
        </authorList>
    </citation>
    <scope>NUCLEOTIDE SEQUENCE [LARGE SCALE MRNA]</scope>
    <source>
        <strain>FVB/N</strain>
        <tissue>Mammary tumor</tissue>
    </source>
</reference>
<reference key="3">
    <citation type="journal article" date="2010" name="Cell">
        <title>A tissue-specific atlas of mouse protein phosphorylation and expression.</title>
        <authorList>
            <person name="Huttlin E.L."/>
            <person name="Jedrychowski M.P."/>
            <person name="Elias J.E."/>
            <person name="Goswami T."/>
            <person name="Rad R."/>
            <person name="Beausoleil S.A."/>
            <person name="Villen J."/>
            <person name="Haas W."/>
            <person name="Sowa M.E."/>
            <person name="Gygi S.P."/>
        </authorList>
    </citation>
    <scope>IDENTIFICATION BY MASS SPECTROMETRY [LARGE SCALE ANALYSIS]</scope>
    <source>
        <tissue>Brain</tissue>
        <tissue>Heart</tissue>
        <tissue>Lung</tissue>
        <tissue>Spleen</tissue>
    </source>
</reference>
<sequence length="184" mass="20809">MLRKMGEAVARVARKVNETVESGSDTLDLADCKLVSFPICIYKVLRNVSDQIHLITLANNELKSLTSKFMTTFNQLRELRLEGNYLFRLPNEVSSLQHLRAIDLSRNQFQDFPEQLTTLPALETINLEENEIVDVPVEKLAAMPALRVINLRLNPLSADVRVIAPPLIKFDMLMSPEDTRAPPP</sequence>
<proteinExistence type="evidence at protein level"/>
<dbReference type="EMBL" id="AK139384">
    <property type="protein sequence ID" value="BAE23986.1"/>
    <property type="molecule type" value="mRNA"/>
</dbReference>
<dbReference type="EMBL" id="AK145920">
    <property type="protein sequence ID" value="BAE26751.1"/>
    <property type="molecule type" value="mRNA"/>
</dbReference>
<dbReference type="EMBL" id="AK150142">
    <property type="protein sequence ID" value="BAE29337.1"/>
    <property type="molecule type" value="mRNA"/>
</dbReference>
<dbReference type="EMBL" id="AK150246">
    <property type="protein sequence ID" value="BAE29410.1"/>
    <property type="molecule type" value="mRNA"/>
</dbReference>
<dbReference type="EMBL" id="AK136380">
    <property type="protein sequence ID" value="BAE22954.1"/>
    <property type="molecule type" value="mRNA"/>
</dbReference>
<dbReference type="EMBL" id="BC036304">
    <property type="protein sequence ID" value="AAH36304.1"/>
    <property type="molecule type" value="mRNA"/>
</dbReference>
<dbReference type="CCDS" id="CCDS23881.1"/>
<dbReference type="RefSeq" id="NP_705770.1">
    <property type="nucleotide sequence ID" value="NM_153542.1"/>
</dbReference>
<dbReference type="SMR" id="Q8CI70"/>
<dbReference type="BioGRID" id="229686">
    <property type="interactions" value="1"/>
</dbReference>
<dbReference type="FunCoup" id="Q8CI70">
    <property type="interactions" value="4"/>
</dbReference>
<dbReference type="STRING" id="10090.ENSMUSP00000048042"/>
<dbReference type="PhosphoSitePlus" id="Q8CI70"/>
<dbReference type="jPOST" id="Q8CI70"/>
<dbReference type="PaxDb" id="10090-ENSMUSP00000048042"/>
<dbReference type="PeptideAtlas" id="Q8CI70"/>
<dbReference type="ProteomicsDB" id="287262"/>
<dbReference type="Pumba" id="Q8CI70"/>
<dbReference type="Antibodypedia" id="29015">
    <property type="antibodies" value="64 antibodies from 18 providers"/>
</dbReference>
<dbReference type="Ensembl" id="ENSMUST00000049242.9">
    <property type="protein sequence ID" value="ENSMUSP00000048042.8"/>
    <property type="gene ID" value="ENSMUSG00000037151.9"/>
</dbReference>
<dbReference type="GeneID" id="216011"/>
<dbReference type="KEGG" id="mmu:216011"/>
<dbReference type="UCSC" id="uc007fgc.1">
    <property type="organism name" value="mouse"/>
</dbReference>
<dbReference type="AGR" id="MGI:2387182"/>
<dbReference type="CTD" id="55222"/>
<dbReference type="MGI" id="MGI:2387182">
    <property type="gene designation" value="Lrrc20"/>
</dbReference>
<dbReference type="VEuPathDB" id="HostDB:ENSMUSG00000037151"/>
<dbReference type="eggNOG" id="KOG4579">
    <property type="taxonomic scope" value="Eukaryota"/>
</dbReference>
<dbReference type="GeneTree" id="ENSGT00730000111199"/>
<dbReference type="HOGENOM" id="CLU_070683_2_1_1"/>
<dbReference type="InParanoid" id="Q8CI70"/>
<dbReference type="OMA" id="WINVKSN"/>
<dbReference type="OrthoDB" id="1060944at2759"/>
<dbReference type="PhylomeDB" id="Q8CI70"/>
<dbReference type="TreeFam" id="TF319816"/>
<dbReference type="BioGRID-ORCS" id="216011">
    <property type="hits" value="0 hits in 76 CRISPR screens"/>
</dbReference>
<dbReference type="ChiTaRS" id="Lrrc20">
    <property type="organism name" value="mouse"/>
</dbReference>
<dbReference type="PRO" id="PR:Q8CI70"/>
<dbReference type="Proteomes" id="UP000000589">
    <property type="component" value="Chromosome 10"/>
</dbReference>
<dbReference type="RNAct" id="Q8CI70">
    <property type="molecule type" value="protein"/>
</dbReference>
<dbReference type="Bgee" id="ENSMUSG00000037151">
    <property type="expression patterns" value="Expressed in hindlimb stylopod muscle and 233 other cell types or tissues"/>
</dbReference>
<dbReference type="Gene3D" id="3.80.10.10">
    <property type="entry name" value="Ribonuclease Inhibitor"/>
    <property type="match status" value="1"/>
</dbReference>
<dbReference type="InterPro" id="IPR032675">
    <property type="entry name" value="LRR_dom_sf"/>
</dbReference>
<dbReference type="InterPro" id="IPR050216">
    <property type="entry name" value="LRR_domain-containing"/>
</dbReference>
<dbReference type="PANTHER" id="PTHR48051">
    <property type="match status" value="1"/>
</dbReference>
<dbReference type="PANTHER" id="PTHR48051:SF1">
    <property type="entry name" value="RAS SUPPRESSOR PROTEIN 1"/>
    <property type="match status" value="1"/>
</dbReference>
<dbReference type="SUPFAM" id="SSF52058">
    <property type="entry name" value="L domain-like"/>
    <property type="match status" value="1"/>
</dbReference>
<protein>
    <recommendedName>
        <fullName>Leucine-rich repeat-containing protein 20</fullName>
    </recommendedName>
</protein>
<organism>
    <name type="scientific">Mus musculus</name>
    <name type="common">Mouse</name>
    <dbReference type="NCBI Taxonomy" id="10090"/>
    <lineage>
        <taxon>Eukaryota</taxon>
        <taxon>Metazoa</taxon>
        <taxon>Chordata</taxon>
        <taxon>Craniata</taxon>
        <taxon>Vertebrata</taxon>
        <taxon>Euteleostomi</taxon>
        <taxon>Mammalia</taxon>
        <taxon>Eutheria</taxon>
        <taxon>Euarchontoglires</taxon>
        <taxon>Glires</taxon>
        <taxon>Rodentia</taxon>
        <taxon>Myomorpha</taxon>
        <taxon>Muroidea</taxon>
        <taxon>Muridae</taxon>
        <taxon>Murinae</taxon>
        <taxon>Mus</taxon>
        <taxon>Mus</taxon>
    </lineage>
</organism>